<reference key="1">
    <citation type="submission" date="2005-08" db="EMBL/GenBank/DDBJ databases">
        <title>Complete sequence of chromosome 1 of Nitrosospira multiformis ATCC 25196.</title>
        <authorList>
            <person name="Copeland A."/>
            <person name="Lucas S."/>
            <person name="Lapidus A."/>
            <person name="Barry K."/>
            <person name="Detter J.C."/>
            <person name="Glavina T."/>
            <person name="Hammon N."/>
            <person name="Israni S."/>
            <person name="Pitluck S."/>
            <person name="Chain P."/>
            <person name="Malfatti S."/>
            <person name="Shin M."/>
            <person name="Vergez L."/>
            <person name="Schmutz J."/>
            <person name="Larimer F."/>
            <person name="Land M."/>
            <person name="Hauser L."/>
            <person name="Kyrpides N."/>
            <person name="Lykidis A."/>
            <person name="Richardson P."/>
        </authorList>
    </citation>
    <scope>NUCLEOTIDE SEQUENCE [LARGE SCALE GENOMIC DNA]</scope>
    <source>
        <strain>ATCC 25196 / NCIMB 11849 / C 71</strain>
    </source>
</reference>
<protein>
    <recommendedName>
        <fullName evidence="1">dCTP deaminase</fullName>
        <ecNumber evidence="1">3.5.4.13</ecNumber>
    </recommendedName>
    <alternativeName>
        <fullName evidence="1">Deoxycytidine triphosphate deaminase</fullName>
    </alternativeName>
</protein>
<dbReference type="EC" id="3.5.4.13" evidence="1"/>
<dbReference type="EMBL" id="CP000103">
    <property type="protein sequence ID" value="ABB75260.1"/>
    <property type="molecule type" value="Genomic_DNA"/>
</dbReference>
<dbReference type="RefSeq" id="WP_011381280.1">
    <property type="nucleotide sequence ID" value="NC_007614.1"/>
</dbReference>
<dbReference type="SMR" id="Q2Y7L1"/>
<dbReference type="STRING" id="323848.Nmul_A1965"/>
<dbReference type="KEGG" id="nmu:Nmul_A1965"/>
<dbReference type="eggNOG" id="COG0717">
    <property type="taxonomic scope" value="Bacteria"/>
</dbReference>
<dbReference type="HOGENOM" id="CLU_087476_4_0_4"/>
<dbReference type="OrthoDB" id="9780956at2"/>
<dbReference type="UniPathway" id="UPA00610">
    <property type="reaction ID" value="UER00665"/>
</dbReference>
<dbReference type="Proteomes" id="UP000002718">
    <property type="component" value="Chromosome"/>
</dbReference>
<dbReference type="GO" id="GO:0008829">
    <property type="term" value="F:dCTP deaminase activity"/>
    <property type="evidence" value="ECO:0007669"/>
    <property type="project" value="UniProtKB-UniRule"/>
</dbReference>
<dbReference type="GO" id="GO:0000166">
    <property type="term" value="F:nucleotide binding"/>
    <property type="evidence" value="ECO:0007669"/>
    <property type="project" value="UniProtKB-KW"/>
</dbReference>
<dbReference type="GO" id="GO:0006226">
    <property type="term" value="P:dUMP biosynthetic process"/>
    <property type="evidence" value="ECO:0007669"/>
    <property type="project" value="UniProtKB-UniPathway"/>
</dbReference>
<dbReference type="GO" id="GO:0006229">
    <property type="term" value="P:dUTP biosynthetic process"/>
    <property type="evidence" value="ECO:0007669"/>
    <property type="project" value="UniProtKB-UniRule"/>
</dbReference>
<dbReference type="GO" id="GO:0015949">
    <property type="term" value="P:nucleobase-containing small molecule interconversion"/>
    <property type="evidence" value="ECO:0007669"/>
    <property type="project" value="TreeGrafter"/>
</dbReference>
<dbReference type="CDD" id="cd07557">
    <property type="entry name" value="trimeric_dUTPase"/>
    <property type="match status" value="1"/>
</dbReference>
<dbReference type="FunFam" id="2.70.40.10:FF:000001">
    <property type="entry name" value="dCTP deaminase"/>
    <property type="match status" value="1"/>
</dbReference>
<dbReference type="Gene3D" id="2.70.40.10">
    <property type="match status" value="1"/>
</dbReference>
<dbReference type="HAMAP" id="MF_00146">
    <property type="entry name" value="dCTP_deaminase"/>
    <property type="match status" value="1"/>
</dbReference>
<dbReference type="InterPro" id="IPR011962">
    <property type="entry name" value="dCTP_deaminase"/>
</dbReference>
<dbReference type="InterPro" id="IPR036157">
    <property type="entry name" value="dUTPase-like_sf"/>
</dbReference>
<dbReference type="InterPro" id="IPR033704">
    <property type="entry name" value="dUTPase_trimeric"/>
</dbReference>
<dbReference type="NCBIfam" id="TIGR02274">
    <property type="entry name" value="dCTP_deam"/>
    <property type="match status" value="1"/>
</dbReference>
<dbReference type="PANTHER" id="PTHR42680">
    <property type="entry name" value="DCTP DEAMINASE"/>
    <property type="match status" value="1"/>
</dbReference>
<dbReference type="PANTHER" id="PTHR42680:SF3">
    <property type="entry name" value="DCTP DEAMINASE"/>
    <property type="match status" value="1"/>
</dbReference>
<dbReference type="Pfam" id="PF22769">
    <property type="entry name" value="DCD"/>
    <property type="match status" value="1"/>
</dbReference>
<dbReference type="SUPFAM" id="SSF51283">
    <property type="entry name" value="dUTPase-like"/>
    <property type="match status" value="1"/>
</dbReference>
<name>DCD_NITMU</name>
<proteinExistence type="inferred from homology"/>
<keyword id="KW-0378">Hydrolase</keyword>
<keyword id="KW-0546">Nucleotide metabolism</keyword>
<keyword id="KW-0547">Nucleotide-binding</keyword>
<keyword id="KW-1185">Reference proteome</keyword>
<comment type="function">
    <text evidence="1">Catalyzes the deamination of dCTP to dUTP.</text>
</comment>
<comment type="catalytic activity">
    <reaction evidence="1">
        <text>dCTP + H2O + H(+) = dUTP + NH4(+)</text>
        <dbReference type="Rhea" id="RHEA:22680"/>
        <dbReference type="ChEBI" id="CHEBI:15377"/>
        <dbReference type="ChEBI" id="CHEBI:15378"/>
        <dbReference type="ChEBI" id="CHEBI:28938"/>
        <dbReference type="ChEBI" id="CHEBI:61481"/>
        <dbReference type="ChEBI" id="CHEBI:61555"/>
        <dbReference type="EC" id="3.5.4.13"/>
    </reaction>
</comment>
<comment type="pathway">
    <text evidence="1">Pyrimidine metabolism; dUMP biosynthesis; dUMP from dCTP (dUTP route): step 1/2.</text>
</comment>
<comment type="subunit">
    <text evidence="1">Homotrimer.</text>
</comment>
<comment type="similarity">
    <text evidence="1">Belongs to the dCTP deaminase family.</text>
</comment>
<sequence>MTIKSDKWIRRMAMEHGMIEPFEPNQVKHAPDGHKIVSYGTSSYGYDIRCSDEFKLFTNINSAIVDPKNFDSNSFVDVKSNICLIPPNSFALARTVEYFRIPRNVLTICLGKSTYARCGIIVNVTPFEPEWEGFVTLEFSNTTPLPAKIYANEGVAQVIFFESDEICETSYKDRGGKYQGQHGVTLPKI</sequence>
<gene>
    <name evidence="1" type="primary">dcd</name>
    <name type="ordered locus">Nmul_A1965</name>
</gene>
<organism>
    <name type="scientific">Nitrosospira multiformis (strain ATCC 25196 / NCIMB 11849 / C 71)</name>
    <dbReference type="NCBI Taxonomy" id="323848"/>
    <lineage>
        <taxon>Bacteria</taxon>
        <taxon>Pseudomonadati</taxon>
        <taxon>Pseudomonadota</taxon>
        <taxon>Betaproteobacteria</taxon>
        <taxon>Nitrosomonadales</taxon>
        <taxon>Nitrosomonadaceae</taxon>
        <taxon>Nitrosospira</taxon>
    </lineage>
</organism>
<evidence type="ECO:0000255" key="1">
    <source>
        <dbReference type="HAMAP-Rule" id="MF_00146"/>
    </source>
</evidence>
<feature type="chain" id="PRO_1000009771" description="dCTP deaminase">
    <location>
        <begin position="1"/>
        <end position="189"/>
    </location>
</feature>
<feature type="active site" description="Proton donor/acceptor" evidence="1">
    <location>
        <position position="138"/>
    </location>
</feature>
<feature type="binding site" evidence="1">
    <location>
        <begin position="112"/>
        <end position="117"/>
    </location>
    <ligand>
        <name>dCTP</name>
        <dbReference type="ChEBI" id="CHEBI:61481"/>
    </ligand>
</feature>
<feature type="binding site" evidence="1">
    <location>
        <begin position="136"/>
        <end position="138"/>
    </location>
    <ligand>
        <name>dCTP</name>
        <dbReference type="ChEBI" id="CHEBI:61481"/>
    </ligand>
</feature>
<feature type="binding site" evidence="1">
    <location>
        <position position="157"/>
    </location>
    <ligand>
        <name>dCTP</name>
        <dbReference type="ChEBI" id="CHEBI:61481"/>
    </ligand>
</feature>
<feature type="binding site" evidence="1">
    <location>
        <position position="171"/>
    </location>
    <ligand>
        <name>dCTP</name>
        <dbReference type="ChEBI" id="CHEBI:61481"/>
    </ligand>
</feature>
<feature type="binding site" evidence="1">
    <location>
        <position position="181"/>
    </location>
    <ligand>
        <name>dCTP</name>
        <dbReference type="ChEBI" id="CHEBI:61481"/>
    </ligand>
</feature>
<accession>Q2Y7L1</accession>